<evidence type="ECO:0000255" key="1">
    <source>
        <dbReference type="HAMAP-Rule" id="MF_01333"/>
    </source>
</evidence>
<evidence type="ECO:0000305" key="2"/>
<proteinExistence type="inferred from homology"/>
<feature type="chain" id="PRO_0000243016" description="Large ribosomal subunit protein uL5">
    <location>
        <begin position="1"/>
        <end position="195"/>
    </location>
</feature>
<comment type="function">
    <text evidence="1">This is one of the proteins that bind and probably mediate the attachment of the 5S RNA into the large ribosomal subunit, where it forms part of the central protuberance. In the 70S ribosome it contacts protein S13 of the 30S subunit (bridge B1b), connecting the 2 subunits; this bridge is implicated in subunit movement. Contacts the P site tRNA; the 5S rRNA and some of its associated proteins might help stabilize positioning of ribosome-bound tRNAs.</text>
</comment>
<comment type="subunit">
    <text evidence="1">Part of the 50S ribosomal subunit; part of the 5S rRNA/L5/L18/L25 subcomplex. Contacts the 5S rRNA and the P site tRNA. Forms a bridge to the 30S subunit in the 70S ribosome.</text>
</comment>
<comment type="similarity">
    <text evidence="1">Belongs to the universal ribosomal protein uL5 family.</text>
</comment>
<organism>
    <name type="scientific">Leifsonia xyli subsp. xyli (strain CTCB07)</name>
    <dbReference type="NCBI Taxonomy" id="281090"/>
    <lineage>
        <taxon>Bacteria</taxon>
        <taxon>Bacillati</taxon>
        <taxon>Actinomycetota</taxon>
        <taxon>Actinomycetes</taxon>
        <taxon>Micrococcales</taxon>
        <taxon>Microbacteriaceae</taxon>
        <taxon>Leifsonia</taxon>
    </lineage>
</organism>
<keyword id="KW-1185">Reference proteome</keyword>
<keyword id="KW-0687">Ribonucleoprotein</keyword>
<keyword id="KW-0689">Ribosomal protein</keyword>
<keyword id="KW-0694">RNA-binding</keyword>
<keyword id="KW-0699">rRNA-binding</keyword>
<keyword id="KW-0820">tRNA-binding</keyword>
<reference key="1">
    <citation type="journal article" date="2004" name="Mol. Plant Microbe Interact.">
        <title>The genome sequence of the Gram-positive sugarcane pathogen Leifsonia xyli subsp. xyli.</title>
        <authorList>
            <person name="Monteiro-Vitorello C.B."/>
            <person name="Camargo L.E.A."/>
            <person name="Van Sluys M.A."/>
            <person name="Kitajima J.P."/>
            <person name="Truffi D."/>
            <person name="do Amaral A.M."/>
            <person name="Harakava R."/>
            <person name="de Oliveira J.C.F."/>
            <person name="Wood D."/>
            <person name="de Oliveira M.C."/>
            <person name="Miyaki C.Y."/>
            <person name="Takita M.A."/>
            <person name="da Silva A.C.R."/>
            <person name="Furlan L.R."/>
            <person name="Carraro D.M."/>
            <person name="Camarotte G."/>
            <person name="Almeida N.F. Jr."/>
            <person name="Carrer H."/>
            <person name="Coutinho L.L."/>
            <person name="El-Dorry H.A."/>
            <person name="Ferro M.I.T."/>
            <person name="Gagliardi P.R."/>
            <person name="Giglioti E."/>
            <person name="Goldman M.H.S."/>
            <person name="Goldman G.H."/>
            <person name="Kimura E.T."/>
            <person name="Ferro E.S."/>
            <person name="Kuramae E.E."/>
            <person name="Lemos E.G.M."/>
            <person name="Lemos M.V.F."/>
            <person name="Mauro S.M.Z."/>
            <person name="Machado M.A."/>
            <person name="Marino C.L."/>
            <person name="Menck C.F."/>
            <person name="Nunes L.R."/>
            <person name="Oliveira R.C."/>
            <person name="Pereira G.G."/>
            <person name="Siqueira W."/>
            <person name="de Souza A.A."/>
            <person name="Tsai S.M."/>
            <person name="Zanca A.S."/>
            <person name="Simpson A.J.G."/>
            <person name="Brumbley S.M."/>
            <person name="Setubal J.C."/>
        </authorList>
    </citation>
    <scope>NUCLEOTIDE SEQUENCE [LARGE SCALE GENOMIC DNA]</scope>
    <source>
        <strain>CTCB07</strain>
    </source>
</reference>
<gene>
    <name evidence="1" type="primary">rplE</name>
    <name type="ordered locus">Lxx20210</name>
</gene>
<sequence>MTDTATSAGKIQPRLKQKYKTEIAANLSKDFGFTNVHQVPGLVKIVVNMGMGEAARDGKVIDGAINDLTLITGQKPQVTKARKSIAQFKLREGQPIGAHVTLRGDRMWEFLDRLLSLALPRIRDFRGLSDKQFDGNGNYTFGLTEQSMFHEINQDRIDRVRGMDITVVTTAKNDEEGRALLKQLGFPFRSVEAAS</sequence>
<protein>
    <recommendedName>
        <fullName evidence="1">Large ribosomal subunit protein uL5</fullName>
    </recommendedName>
    <alternativeName>
        <fullName evidence="2">50S ribosomal protein L5</fullName>
    </alternativeName>
</protein>
<dbReference type="EMBL" id="AE016822">
    <property type="protein sequence ID" value="AAT89737.1"/>
    <property type="molecule type" value="Genomic_DNA"/>
</dbReference>
<dbReference type="RefSeq" id="WP_011186723.1">
    <property type="nucleotide sequence ID" value="NC_006087.1"/>
</dbReference>
<dbReference type="SMR" id="Q6AD07"/>
<dbReference type="STRING" id="281090.Lxx20210"/>
<dbReference type="KEGG" id="lxx:Lxx20210"/>
<dbReference type="eggNOG" id="COG0094">
    <property type="taxonomic scope" value="Bacteria"/>
</dbReference>
<dbReference type="HOGENOM" id="CLU_061015_2_1_11"/>
<dbReference type="Proteomes" id="UP000001306">
    <property type="component" value="Chromosome"/>
</dbReference>
<dbReference type="GO" id="GO:1990904">
    <property type="term" value="C:ribonucleoprotein complex"/>
    <property type="evidence" value="ECO:0007669"/>
    <property type="project" value="UniProtKB-KW"/>
</dbReference>
<dbReference type="GO" id="GO:0005840">
    <property type="term" value="C:ribosome"/>
    <property type="evidence" value="ECO:0007669"/>
    <property type="project" value="UniProtKB-KW"/>
</dbReference>
<dbReference type="GO" id="GO:0019843">
    <property type="term" value="F:rRNA binding"/>
    <property type="evidence" value="ECO:0007669"/>
    <property type="project" value="UniProtKB-UniRule"/>
</dbReference>
<dbReference type="GO" id="GO:0003735">
    <property type="term" value="F:structural constituent of ribosome"/>
    <property type="evidence" value="ECO:0007669"/>
    <property type="project" value="InterPro"/>
</dbReference>
<dbReference type="GO" id="GO:0000049">
    <property type="term" value="F:tRNA binding"/>
    <property type="evidence" value="ECO:0007669"/>
    <property type="project" value="UniProtKB-UniRule"/>
</dbReference>
<dbReference type="GO" id="GO:0006412">
    <property type="term" value="P:translation"/>
    <property type="evidence" value="ECO:0007669"/>
    <property type="project" value="UniProtKB-UniRule"/>
</dbReference>
<dbReference type="FunFam" id="3.30.1440.10:FF:000001">
    <property type="entry name" value="50S ribosomal protein L5"/>
    <property type="match status" value="1"/>
</dbReference>
<dbReference type="Gene3D" id="3.30.1440.10">
    <property type="match status" value="1"/>
</dbReference>
<dbReference type="HAMAP" id="MF_01333_B">
    <property type="entry name" value="Ribosomal_uL5_B"/>
    <property type="match status" value="1"/>
</dbReference>
<dbReference type="InterPro" id="IPR002132">
    <property type="entry name" value="Ribosomal_uL5"/>
</dbReference>
<dbReference type="InterPro" id="IPR020930">
    <property type="entry name" value="Ribosomal_uL5_bac-type"/>
</dbReference>
<dbReference type="InterPro" id="IPR031309">
    <property type="entry name" value="Ribosomal_uL5_C"/>
</dbReference>
<dbReference type="InterPro" id="IPR022803">
    <property type="entry name" value="Ribosomal_uL5_dom_sf"/>
</dbReference>
<dbReference type="InterPro" id="IPR031310">
    <property type="entry name" value="Ribosomal_uL5_N"/>
</dbReference>
<dbReference type="NCBIfam" id="NF000585">
    <property type="entry name" value="PRK00010.1"/>
    <property type="match status" value="1"/>
</dbReference>
<dbReference type="PANTHER" id="PTHR11994">
    <property type="entry name" value="60S RIBOSOMAL PROTEIN L11-RELATED"/>
    <property type="match status" value="1"/>
</dbReference>
<dbReference type="Pfam" id="PF00281">
    <property type="entry name" value="Ribosomal_L5"/>
    <property type="match status" value="1"/>
</dbReference>
<dbReference type="Pfam" id="PF00673">
    <property type="entry name" value="Ribosomal_L5_C"/>
    <property type="match status" value="1"/>
</dbReference>
<dbReference type="PIRSF" id="PIRSF002161">
    <property type="entry name" value="Ribosomal_L5"/>
    <property type="match status" value="1"/>
</dbReference>
<dbReference type="SUPFAM" id="SSF55282">
    <property type="entry name" value="RL5-like"/>
    <property type="match status" value="1"/>
</dbReference>
<accession>Q6AD07</accession>
<name>RL5_LEIXX</name>